<proteinExistence type="inferred from homology"/>
<reference key="1">
    <citation type="journal article" date="2004" name="Nature">
        <title>Genome evolution in yeasts.</title>
        <authorList>
            <person name="Dujon B."/>
            <person name="Sherman D."/>
            <person name="Fischer G."/>
            <person name="Durrens P."/>
            <person name="Casaregola S."/>
            <person name="Lafontaine I."/>
            <person name="de Montigny J."/>
            <person name="Marck C."/>
            <person name="Neuveglise C."/>
            <person name="Talla E."/>
            <person name="Goffard N."/>
            <person name="Frangeul L."/>
            <person name="Aigle M."/>
            <person name="Anthouard V."/>
            <person name="Babour A."/>
            <person name="Barbe V."/>
            <person name="Barnay S."/>
            <person name="Blanchin S."/>
            <person name="Beckerich J.-M."/>
            <person name="Beyne E."/>
            <person name="Bleykasten C."/>
            <person name="Boisrame A."/>
            <person name="Boyer J."/>
            <person name="Cattolico L."/>
            <person name="Confanioleri F."/>
            <person name="de Daruvar A."/>
            <person name="Despons L."/>
            <person name="Fabre E."/>
            <person name="Fairhead C."/>
            <person name="Ferry-Dumazet H."/>
            <person name="Groppi A."/>
            <person name="Hantraye F."/>
            <person name="Hennequin C."/>
            <person name="Jauniaux N."/>
            <person name="Joyet P."/>
            <person name="Kachouri R."/>
            <person name="Kerrest A."/>
            <person name="Koszul R."/>
            <person name="Lemaire M."/>
            <person name="Lesur I."/>
            <person name="Ma L."/>
            <person name="Muller H."/>
            <person name="Nicaud J.-M."/>
            <person name="Nikolski M."/>
            <person name="Oztas S."/>
            <person name="Ozier-Kalogeropoulos O."/>
            <person name="Pellenz S."/>
            <person name="Potier S."/>
            <person name="Richard G.-F."/>
            <person name="Straub M.-L."/>
            <person name="Suleau A."/>
            <person name="Swennen D."/>
            <person name="Tekaia F."/>
            <person name="Wesolowski-Louvel M."/>
            <person name="Westhof E."/>
            <person name="Wirth B."/>
            <person name="Zeniou-Meyer M."/>
            <person name="Zivanovic Y."/>
            <person name="Bolotin-Fukuhara M."/>
            <person name="Thierry A."/>
            <person name="Bouchier C."/>
            <person name="Caudron B."/>
            <person name="Scarpelli C."/>
            <person name="Gaillardin C."/>
            <person name="Weissenbach J."/>
            <person name="Wincker P."/>
            <person name="Souciet J.-L."/>
        </authorList>
    </citation>
    <scope>NUCLEOTIDE SEQUENCE [LARGE SCALE GENOMIC DNA]</scope>
    <source>
        <strain>ATCC 36239 / CBS 767 / BCRC 21394 / JCM 1990 / NBRC 0083 / IGC 2968</strain>
    </source>
</reference>
<dbReference type="EMBL" id="CR382136">
    <property type="protein sequence ID" value="CAR65691.1"/>
    <property type="status" value="ALT_INIT"/>
    <property type="molecule type" value="Genomic_DNA"/>
</dbReference>
<dbReference type="RefSeq" id="XP_002770337.1">
    <property type="nucleotide sequence ID" value="XM_002770291.1"/>
</dbReference>
<dbReference type="SMR" id="Q6BRA6"/>
<dbReference type="FunCoup" id="Q6BRA6">
    <property type="interactions" value="160"/>
</dbReference>
<dbReference type="STRING" id="284592.Q6BRA6"/>
<dbReference type="GeneID" id="8998557"/>
<dbReference type="KEGG" id="dha:DEHA2D17886g"/>
<dbReference type="eggNOG" id="ENOG502QVZE">
    <property type="taxonomic scope" value="Eukaryota"/>
</dbReference>
<dbReference type="HOGENOM" id="CLU_249394_0_0_1"/>
<dbReference type="InParanoid" id="Q6BRA6"/>
<dbReference type="OrthoDB" id="447953at2759"/>
<dbReference type="Proteomes" id="UP000000599">
    <property type="component" value="Chromosome D"/>
</dbReference>
<dbReference type="GO" id="GO:1990316">
    <property type="term" value="C:Atg1/ULK1 kinase complex"/>
    <property type="evidence" value="ECO:0007669"/>
    <property type="project" value="TreeGrafter"/>
</dbReference>
<dbReference type="GO" id="GO:0034045">
    <property type="term" value="C:phagophore assembly site membrane"/>
    <property type="evidence" value="ECO:0007669"/>
    <property type="project" value="UniProtKB-SubCell"/>
</dbReference>
<dbReference type="GO" id="GO:0005774">
    <property type="term" value="C:vacuolar membrane"/>
    <property type="evidence" value="ECO:0007669"/>
    <property type="project" value="UniProtKB-SubCell"/>
</dbReference>
<dbReference type="GO" id="GO:0060090">
    <property type="term" value="F:molecular adaptor activity"/>
    <property type="evidence" value="ECO:0007669"/>
    <property type="project" value="TreeGrafter"/>
</dbReference>
<dbReference type="GO" id="GO:0019901">
    <property type="term" value="F:protein kinase binding"/>
    <property type="evidence" value="ECO:0007669"/>
    <property type="project" value="TreeGrafter"/>
</dbReference>
<dbReference type="GO" id="GO:0000045">
    <property type="term" value="P:autophagosome assembly"/>
    <property type="evidence" value="ECO:0007669"/>
    <property type="project" value="InterPro"/>
</dbReference>
<dbReference type="GO" id="GO:0000422">
    <property type="term" value="P:autophagy of mitochondrion"/>
    <property type="evidence" value="ECO:0007669"/>
    <property type="project" value="TreeGrafter"/>
</dbReference>
<dbReference type="GO" id="GO:0034727">
    <property type="term" value="P:piecemeal microautophagy of the nucleus"/>
    <property type="evidence" value="ECO:0007669"/>
    <property type="project" value="TreeGrafter"/>
</dbReference>
<dbReference type="GO" id="GO:0015031">
    <property type="term" value="P:protein transport"/>
    <property type="evidence" value="ECO:0007669"/>
    <property type="project" value="UniProtKB-KW"/>
</dbReference>
<dbReference type="GO" id="GO:0061709">
    <property type="term" value="P:reticulophagy"/>
    <property type="evidence" value="ECO:0007669"/>
    <property type="project" value="TreeGrafter"/>
</dbReference>
<dbReference type="GO" id="GO:0034517">
    <property type="term" value="P:ribophagy"/>
    <property type="evidence" value="ECO:0007669"/>
    <property type="project" value="TreeGrafter"/>
</dbReference>
<dbReference type="Gene3D" id="1.10.287.1490">
    <property type="match status" value="1"/>
</dbReference>
<dbReference type="InterPro" id="IPR040040">
    <property type="entry name" value="ATG11"/>
</dbReference>
<dbReference type="InterPro" id="IPR019460">
    <property type="entry name" value="Atg11_C"/>
</dbReference>
<dbReference type="InterPro" id="IPR045326">
    <property type="entry name" value="ATG17-like_dom"/>
</dbReference>
<dbReference type="PANTHER" id="PTHR13222">
    <property type="entry name" value="RB1-INDUCIBLE COILED-COIL"/>
    <property type="match status" value="1"/>
</dbReference>
<dbReference type="PANTHER" id="PTHR13222:SF1">
    <property type="entry name" value="RB1-INDUCIBLE COILED-COIL PROTEIN 1"/>
    <property type="match status" value="1"/>
</dbReference>
<dbReference type="Pfam" id="PF10377">
    <property type="entry name" value="ATG11"/>
    <property type="match status" value="1"/>
</dbReference>
<dbReference type="Pfam" id="PF04108">
    <property type="entry name" value="ATG17_like"/>
    <property type="match status" value="1"/>
</dbReference>
<name>ATG11_DEBHA</name>
<accession>Q6BRA6</accession>
<accession>B5RTK6</accession>
<evidence type="ECO:0000250" key="1"/>
<evidence type="ECO:0000255" key="2"/>
<evidence type="ECO:0000256" key="3">
    <source>
        <dbReference type="SAM" id="MobiDB-lite"/>
    </source>
</evidence>
<evidence type="ECO:0000305" key="4"/>
<gene>
    <name type="primary">ATG11</name>
    <name type="ordered locus">DEHA2D17886g</name>
</gene>
<comment type="function">
    <text evidence="1">Involved in cytoplasm to vacuole transport (Cvt), pexophagy, mitophagy and nucleophagy. Recruits mitochondria for their selective degradation via autophagy (mitophagy) during starvation. Works as scaffold proteins that recruit ATG proteins to the pre-autophagosome (PAS), the site of vesicle/autophagosome formation. Required for the Cvt vesicles completion (By similarity).</text>
</comment>
<comment type="subunit">
    <text evidence="1">Homodimer.</text>
</comment>
<comment type="subcellular location">
    <subcellularLocation>
        <location evidence="1">Preautophagosomal structure membrane</location>
        <topology evidence="1">Peripheral membrane protein</topology>
    </subcellularLocation>
    <subcellularLocation>
        <location evidence="1">Vacuole membrane</location>
        <topology evidence="1">Peripheral membrane protein</topology>
    </subcellularLocation>
    <text evidence="1">During pexophagy, accumulates in the vacuolar membrane region, where the peroxisomes contact the vacuole.</text>
</comment>
<comment type="similarity">
    <text evidence="4">Belongs to the ATG11 family.</text>
</comment>
<comment type="sequence caution" evidence="4">
    <conflict type="erroneous initiation">
        <sequence resource="EMBL-CDS" id="CAR65691"/>
    </conflict>
</comment>
<protein>
    <recommendedName>
        <fullName>Autophagy-related protein 11</fullName>
    </recommendedName>
</protein>
<keyword id="KW-0072">Autophagy</keyword>
<keyword id="KW-0175">Coiled coil</keyword>
<keyword id="KW-0472">Membrane</keyword>
<keyword id="KW-0653">Protein transport</keyword>
<keyword id="KW-1185">Reference proteome</keyword>
<keyword id="KW-0813">Transport</keyword>
<keyword id="KW-0926">Vacuole</keyword>
<organism>
    <name type="scientific">Debaryomyces hansenii (strain ATCC 36239 / CBS 767 / BCRC 21394 / JCM 1990 / NBRC 0083 / IGC 2968)</name>
    <name type="common">Yeast</name>
    <name type="synonym">Torulaspora hansenii</name>
    <dbReference type="NCBI Taxonomy" id="284592"/>
    <lineage>
        <taxon>Eukaryota</taxon>
        <taxon>Fungi</taxon>
        <taxon>Dikarya</taxon>
        <taxon>Ascomycota</taxon>
        <taxon>Saccharomycotina</taxon>
        <taxon>Pichiomycetes</taxon>
        <taxon>Debaryomycetaceae</taxon>
        <taxon>Debaryomyces</taxon>
    </lineage>
</organism>
<sequence length="1282" mass="146453">MVAPISYLTLYNAHNGDSVKIPKPIRFHSLNGLKSFIHESFTDYIISDIENIFLLTSFGMKVKFNIINELNDIYVFDKRLFSGARDETIINAYVNQNEGGYKEMIKPTPSSLVKLEKTNIKQMTSSLKVNDGWSKALFQDCLGVVGQMKAYVKQINTIFKCLNIIFQFGSNFINGIEKSFNNYLNYIKLLNLKTLHRSWNGYYNNLRKFPSFQLKNGTGNIKISDHLNTSELEKSSSFVSKTLPLVINKFNEMSASINSVNDDKVNVDKLIESLRNESIENFKDYDTGSEDIIKDVSRLSQLISHDIDKLSTNVSISLDWVYRIHKDEISPKIFDKATGLYKILQNLYLFKNKIVDESLSIFGKIANLQMRMVNIKNDLRILTNADDNNDIANENEISIHVINNIKSAEDYLSLTIDLPLLFGFMLIEKRRQFEWHEFYSKGIVNNVSEQLSVIIDHEKIFRKLWLKKFGNFLSILNSKDENDALRTVLPSIDVTLVNGNAESNSTFGIINNIQVERDDISTYINALEEYSNAGTTSSPSSKKFSELMKKNFQDLIKCTNNMKRVTKMVSSLSSFTSPVANEIKNNDKLLANSKDENNDKQAEGGGHMSELGEVDYDINLVKGLKIRIRKLENLLHQQQYKDLSNWPVTRSNGANATSTSETDGKFSLILDSNQKTSTSSNSKIDPTNLLQRRQTLPLKLGHEKPTTSQQSNHLDVSTTIDKHLDNIRLKKENNELTNENLKLSNTNRTNEKLIEALNKQISNLKTVNDDQNKHHEEKLRKRDAENQQTITRLETELQAFKPQNNKEVVDLKDKLSLRDAEILDLRKDITRLHDVNEGFTEEVTKLNEKIATLQSDINDVNAMKKDLLSNMASKETDTINHRISLEEEIKKLHSKIEELTEDYENLMDLTQSKHNNLDIMVNYLNNMIIHLLSSIKCLVEQQFETFIEFCFILESMGLLLIKEHNNNKNLDEYKITRVKGLKSKRNDKIVPTSANGNVLDETPIVSTMGNMPTSKVVDDINKIIGWVDDIQSFKNISTKSSEDGDEKSCSANTAGSVSSSVIDDLPEEITNLSVEETNKFNRQSLELVKLFRDIFKSSNGSISKFEDFINTIRFKENICINQNQDDSGVSNKFFLGAITKRFKDVEGFAKKLTKENKSKAHELSQLIGKLNCKISMNSFEMDDLVLFLPTRIDRAEEIDENFQPWAAFNIGAPHYFLRVQKNEGNKTGITHSIKDKEWMVGRVTYIEEHTVTDANFNDKDANPFHLSTGVVWYVVDAKEEIF</sequence>
<feature type="chain" id="PRO_0000124546" description="Autophagy-related protein 11">
    <location>
        <begin position="1"/>
        <end position="1282"/>
    </location>
</feature>
<feature type="region of interest" description="Disordered" evidence="3">
    <location>
        <begin position="586"/>
        <end position="609"/>
    </location>
</feature>
<feature type="coiled-coil region" evidence="2">
    <location>
        <begin position="579"/>
        <end position="641"/>
    </location>
</feature>
<feature type="coiled-coil region" evidence="2">
    <location>
        <begin position="722"/>
        <end position="799"/>
    </location>
</feature>
<feature type="coiled-coil region" evidence="2">
    <location>
        <begin position="834"/>
        <end position="917"/>
    </location>
</feature>
<feature type="compositionally biased region" description="Basic and acidic residues" evidence="3">
    <location>
        <begin position="593"/>
        <end position="602"/>
    </location>
</feature>